<keyword id="KW-0067">ATP-binding</keyword>
<keyword id="KW-0963">Cytoplasm</keyword>
<keyword id="KW-0227">DNA damage</keyword>
<keyword id="KW-0233">DNA recombination</keyword>
<keyword id="KW-0234">DNA repair</keyword>
<keyword id="KW-0238">DNA-binding</keyword>
<keyword id="KW-0378">Hydrolase</keyword>
<keyword id="KW-0547">Nucleotide-binding</keyword>
<keyword id="KW-1185">Reference proteome</keyword>
<sequence length="354" mass="38553">MTLQTDDFAPAPARRVVSAAPASPQEQAIERALRPKLLQEYVGQVKAREQLEIFIGAARQRGEALDHVLLFGPPGLGKTTLSHIIAAELGVNLRQTSGPVLEKPKDLAALLTNLENRDVLFIDEIHRLSPVVEEILYPALEDYQIDIMIGEGPAARSIKLDLQPFTLVGATTRAGMLTNPLRDRFGIVARLEFYSAQELARIVKRSAGLLGVPMDDAGGLEIARRSRGTPRIANRLLRRVRDYTQVKADGHITKDIAERALAMLDVDPEGLDVMDRKLLEAVIHRFDGGPVGLDNIAASIGEETGTIEDVIEPYLIQQGFLQRTPRGRIATQAAFRHLGIAAAPGAQAPGLFAV</sequence>
<gene>
    <name evidence="1" type="primary">ruvB</name>
    <name type="ordered locus">Veis_4070</name>
</gene>
<reference key="1">
    <citation type="submission" date="2006-12" db="EMBL/GenBank/DDBJ databases">
        <title>Complete sequence of chromosome 1 of Verminephrobacter eiseniae EF01-2.</title>
        <authorList>
            <person name="Copeland A."/>
            <person name="Lucas S."/>
            <person name="Lapidus A."/>
            <person name="Barry K."/>
            <person name="Detter J.C."/>
            <person name="Glavina del Rio T."/>
            <person name="Dalin E."/>
            <person name="Tice H."/>
            <person name="Pitluck S."/>
            <person name="Chertkov O."/>
            <person name="Brettin T."/>
            <person name="Bruce D."/>
            <person name="Han C."/>
            <person name="Tapia R."/>
            <person name="Gilna P."/>
            <person name="Schmutz J."/>
            <person name="Larimer F."/>
            <person name="Land M."/>
            <person name="Hauser L."/>
            <person name="Kyrpides N."/>
            <person name="Kim E."/>
            <person name="Stahl D."/>
            <person name="Richardson P."/>
        </authorList>
    </citation>
    <scope>NUCLEOTIDE SEQUENCE [LARGE SCALE GENOMIC DNA]</scope>
    <source>
        <strain>EF01-2</strain>
    </source>
</reference>
<evidence type="ECO:0000255" key="1">
    <source>
        <dbReference type="HAMAP-Rule" id="MF_00016"/>
    </source>
</evidence>
<evidence type="ECO:0000256" key="2">
    <source>
        <dbReference type="SAM" id="MobiDB-lite"/>
    </source>
</evidence>
<organism>
    <name type="scientific">Verminephrobacter eiseniae (strain EF01-2)</name>
    <dbReference type="NCBI Taxonomy" id="391735"/>
    <lineage>
        <taxon>Bacteria</taxon>
        <taxon>Pseudomonadati</taxon>
        <taxon>Pseudomonadota</taxon>
        <taxon>Betaproteobacteria</taxon>
        <taxon>Burkholderiales</taxon>
        <taxon>Comamonadaceae</taxon>
        <taxon>Verminephrobacter</taxon>
    </lineage>
</organism>
<feature type="chain" id="PRO_1000001496" description="Holliday junction branch migration complex subunit RuvB">
    <location>
        <begin position="1"/>
        <end position="354"/>
    </location>
</feature>
<feature type="region of interest" description="Disordered" evidence="2">
    <location>
        <begin position="1"/>
        <end position="22"/>
    </location>
</feature>
<feature type="region of interest" description="Large ATPase domain (RuvB-L)" evidence="1">
    <location>
        <begin position="5"/>
        <end position="194"/>
    </location>
</feature>
<feature type="region of interest" description="Small ATPAse domain (RuvB-S)" evidence="1">
    <location>
        <begin position="195"/>
        <end position="265"/>
    </location>
</feature>
<feature type="region of interest" description="Head domain (RuvB-H)" evidence="1">
    <location>
        <begin position="268"/>
        <end position="354"/>
    </location>
</feature>
<feature type="compositionally biased region" description="Low complexity" evidence="2">
    <location>
        <begin position="9"/>
        <end position="22"/>
    </location>
</feature>
<feature type="binding site" evidence="1">
    <location>
        <position position="33"/>
    </location>
    <ligand>
        <name>ATP</name>
        <dbReference type="ChEBI" id="CHEBI:30616"/>
    </ligand>
</feature>
<feature type="binding site" evidence="1">
    <location>
        <position position="34"/>
    </location>
    <ligand>
        <name>ATP</name>
        <dbReference type="ChEBI" id="CHEBI:30616"/>
    </ligand>
</feature>
<feature type="binding site" evidence="1">
    <location>
        <position position="75"/>
    </location>
    <ligand>
        <name>ATP</name>
        <dbReference type="ChEBI" id="CHEBI:30616"/>
    </ligand>
</feature>
<feature type="binding site" evidence="1">
    <location>
        <position position="78"/>
    </location>
    <ligand>
        <name>ATP</name>
        <dbReference type="ChEBI" id="CHEBI:30616"/>
    </ligand>
</feature>
<feature type="binding site" evidence="1">
    <location>
        <position position="79"/>
    </location>
    <ligand>
        <name>ATP</name>
        <dbReference type="ChEBI" id="CHEBI:30616"/>
    </ligand>
</feature>
<feature type="binding site" evidence="1">
    <location>
        <position position="79"/>
    </location>
    <ligand>
        <name>Mg(2+)</name>
        <dbReference type="ChEBI" id="CHEBI:18420"/>
    </ligand>
</feature>
<feature type="binding site" evidence="1">
    <location>
        <position position="80"/>
    </location>
    <ligand>
        <name>ATP</name>
        <dbReference type="ChEBI" id="CHEBI:30616"/>
    </ligand>
</feature>
<feature type="binding site" evidence="1">
    <location>
        <begin position="141"/>
        <end position="143"/>
    </location>
    <ligand>
        <name>ATP</name>
        <dbReference type="ChEBI" id="CHEBI:30616"/>
    </ligand>
</feature>
<feature type="binding site" evidence="1">
    <location>
        <position position="184"/>
    </location>
    <ligand>
        <name>ATP</name>
        <dbReference type="ChEBI" id="CHEBI:30616"/>
    </ligand>
</feature>
<feature type="binding site" evidence="1">
    <location>
        <position position="194"/>
    </location>
    <ligand>
        <name>ATP</name>
        <dbReference type="ChEBI" id="CHEBI:30616"/>
    </ligand>
</feature>
<feature type="binding site" evidence="1">
    <location>
        <position position="231"/>
    </location>
    <ligand>
        <name>ATP</name>
        <dbReference type="ChEBI" id="CHEBI:30616"/>
    </ligand>
</feature>
<feature type="binding site" evidence="1">
    <location>
        <position position="323"/>
    </location>
    <ligand>
        <name>DNA</name>
        <dbReference type="ChEBI" id="CHEBI:16991"/>
    </ligand>
</feature>
<feature type="binding site" evidence="1">
    <location>
        <position position="328"/>
    </location>
    <ligand>
        <name>DNA</name>
        <dbReference type="ChEBI" id="CHEBI:16991"/>
    </ligand>
</feature>
<protein>
    <recommendedName>
        <fullName evidence="1">Holliday junction branch migration complex subunit RuvB</fullName>
        <ecNumber evidence="1">3.6.4.-</ecNumber>
    </recommendedName>
</protein>
<name>RUVB_VEREI</name>
<comment type="function">
    <text evidence="1">The RuvA-RuvB-RuvC complex processes Holliday junction (HJ) DNA during genetic recombination and DNA repair, while the RuvA-RuvB complex plays an important role in the rescue of blocked DNA replication forks via replication fork reversal (RFR). RuvA specifically binds to HJ cruciform DNA, conferring on it an open structure. The RuvB hexamer acts as an ATP-dependent pump, pulling dsDNA into and through the RuvAB complex. RuvB forms 2 homohexamers on either side of HJ DNA bound by 1 or 2 RuvA tetramers; 4 subunits per hexamer contact DNA at a time. Coordinated motions by a converter formed by DNA-disengaged RuvB subunits stimulates ATP hydrolysis and nucleotide exchange. Immobilization of the converter enables RuvB to convert the ATP-contained energy into a lever motion, pulling 2 nucleotides of DNA out of the RuvA tetramer per ATP hydrolyzed, thus driving DNA branch migration. The RuvB motors rotate together with the DNA substrate, which together with the progressing nucleotide cycle form the mechanistic basis for DNA recombination by continuous HJ branch migration. Branch migration allows RuvC to scan DNA until it finds its consensus sequence, where it cleaves and resolves cruciform DNA.</text>
</comment>
<comment type="catalytic activity">
    <reaction evidence="1">
        <text>ATP + H2O = ADP + phosphate + H(+)</text>
        <dbReference type="Rhea" id="RHEA:13065"/>
        <dbReference type="ChEBI" id="CHEBI:15377"/>
        <dbReference type="ChEBI" id="CHEBI:15378"/>
        <dbReference type="ChEBI" id="CHEBI:30616"/>
        <dbReference type="ChEBI" id="CHEBI:43474"/>
        <dbReference type="ChEBI" id="CHEBI:456216"/>
    </reaction>
</comment>
<comment type="subunit">
    <text evidence="1">Homohexamer. Forms an RuvA(8)-RuvB(12)-Holliday junction (HJ) complex. HJ DNA is sandwiched between 2 RuvA tetramers; dsDNA enters through RuvA and exits via RuvB. An RuvB hexamer assembles on each DNA strand where it exits the tetramer. Each RuvB hexamer is contacted by two RuvA subunits (via domain III) on 2 adjacent RuvB subunits; this complex drives branch migration. In the full resolvosome a probable DNA-RuvA(4)-RuvB(12)-RuvC(2) complex forms which resolves the HJ.</text>
</comment>
<comment type="subcellular location">
    <subcellularLocation>
        <location evidence="1">Cytoplasm</location>
    </subcellularLocation>
</comment>
<comment type="domain">
    <text evidence="1">Has 3 domains, the large (RuvB-L) and small ATPase (RuvB-S) domains and the C-terminal head (RuvB-H) domain. The head domain binds DNA, while the ATPase domains jointly bind ATP, ADP or are empty depending on the state of the subunit in the translocation cycle. During a single DNA translocation step the structure of each domain remains the same, but their relative positions change.</text>
</comment>
<comment type="similarity">
    <text evidence="1">Belongs to the RuvB family.</text>
</comment>
<accession>A1WQ68</accession>
<dbReference type="EC" id="3.6.4.-" evidence="1"/>
<dbReference type="EMBL" id="CP000542">
    <property type="protein sequence ID" value="ABM59775.1"/>
    <property type="molecule type" value="Genomic_DNA"/>
</dbReference>
<dbReference type="RefSeq" id="WP_011811762.1">
    <property type="nucleotide sequence ID" value="NC_008786.1"/>
</dbReference>
<dbReference type="SMR" id="A1WQ68"/>
<dbReference type="STRING" id="391735.Veis_4070"/>
<dbReference type="GeneID" id="76462414"/>
<dbReference type="KEGG" id="vei:Veis_4070"/>
<dbReference type="eggNOG" id="COG2255">
    <property type="taxonomic scope" value="Bacteria"/>
</dbReference>
<dbReference type="HOGENOM" id="CLU_055599_1_0_4"/>
<dbReference type="OrthoDB" id="9804478at2"/>
<dbReference type="Proteomes" id="UP000000374">
    <property type="component" value="Chromosome"/>
</dbReference>
<dbReference type="GO" id="GO:0005737">
    <property type="term" value="C:cytoplasm"/>
    <property type="evidence" value="ECO:0007669"/>
    <property type="project" value="UniProtKB-SubCell"/>
</dbReference>
<dbReference type="GO" id="GO:0048476">
    <property type="term" value="C:Holliday junction resolvase complex"/>
    <property type="evidence" value="ECO:0007669"/>
    <property type="project" value="UniProtKB-UniRule"/>
</dbReference>
<dbReference type="GO" id="GO:0005524">
    <property type="term" value="F:ATP binding"/>
    <property type="evidence" value="ECO:0007669"/>
    <property type="project" value="UniProtKB-UniRule"/>
</dbReference>
<dbReference type="GO" id="GO:0016887">
    <property type="term" value="F:ATP hydrolysis activity"/>
    <property type="evidence" value="ECO:0007669"/>
    <property type="project" value="InterPro"/>
</dbReference>
<dbReference type="GO" id="GO:0000400">
    <property type="term" value="F:four-way junction DNA binding"/>
    <property type="evidence" value="ECO:0007669"/>
    <property type="project" value="UniProtKB-UniRule"/>
</dbReference>
<dbReference type="GO" id="GO:0009378">
    <property type="term" value="F:four-way junction helicase activity"/>
    <property type="evidence" value="ECO:0007669"/>
    <property type="project" value="InterPro"/>
</dbReference>
<dbReference type="GO" id="GO:0006310">
    <property type="term" value="P:DNA recombination"/>
    <property type="evidence" value="ECO:0007669"/>
    <property type="project" value="UniProtKB-UniRule"/>
</dbReference>
<dbReference type="GO" id="GO:0006281">
    <property type="term" value="P:DNA repair"/>
    <property type="evidence" value="ECO:0007669"/>
    <property type="project" value="UniProtKB-UniRule"/>
</dbReference>
<dbReference type="CDD" id="cd00009">
    <property type="entry name" value="AAA"/>
    <property type="match status" value="1"/>
</dbReference>
<dbReference type="FunFam" id="1.10.10.10:FF:000086">
    <property type="entry name" value="Holliday junction ATP-dependent DNA helicase RuvB"/>
    <property type="match status" value="1"/>
</dbReference>
<dbReference type="FunFam" id="1.10.8.60:FF:000023">
    <property type="entry name" value="Holliday junction ATP-dependent DNA helicase RuvB"/>
    <property type="match status" value="1"/>
</dbReference>
<dbReference type="FunFam" id="3.40.50.300:FF:000073">
    <property type="entry name" value="Holliday junction ATP-dependent DNA helicase RuvB"/>
    <property type="match status" value="1"/>
</dbReference>
<dbReference type="Gene3D" id="1.10.8.60">
    <property type="match status" value="1"/>
</dbReference>
<dbReference type="Gene3D" id="3.40.50.300">
    <property type="entry name" value="P-loop containing nucleotide triphosphate hydrolases"/>
    <property type="match status" value="1"/>
</dbReference>
<dbReference type="Gene3D" id="1.10.10.10">
    <property type="entry name" value="Winged helix-like DNA-binding domain superfamily/Winged helix DNA-binding domain"/>
    <property type="match status" value="1"/>
</dbReference>
<dbReference type="HAMAP" id="MF_00016">
    <property type="entry name" value="DNA_HJ_migration_RuvB"/>
    <property type="match status" value="1"/>
</dbReference>
<dbReference type="InterPro" id="IPR003593">
    <property type="entry name" value="AAA+_ATPase"/>
</dbReference>
<dbReference type="InterPro" id="IPR041445">
    <property type="entry name" value="AAA_lid_4"/>
</dbReference>
<dbReference type="InterPro" id="IPR004605">
    <property type="entry name" value="DNA_helicase_Holl-junc_RuvB"/>
</dbReference>
<dbReference type="InterPro" id="IPR027417">
    <property type="entry name" value="P-loop_NTPase"/>
</dbReference>
<dbReference type="InterPro" id="IPR008824">
    <property type="entry name" value="RuvB-like_N"/>
</dbReference>
<dbReference type="InterPro" id="IPR008823">
    <property type="entry name" value="RuvB_C"/>
</dbReference>
<dbReference type="InterPro" id="IPR036388">
    <property type="entry name" value="WH-like_DNA-bd_sf"/>
</dbReference>
<dbReference type="InterPro" id="IPR036390">
    <property type="entry name" value="WH_DNA-bd_sf"/>
</dbReference>
<dbReference type="NCBIfam" id="NF000868">
    <property type="entry name" value="PRK00080.1"/>
    <property type="match status" value="1"/>
</dbReference>
<dbReference type="NCBIfam" id="TIGR00635">
    <property type="entry name" value="ruvB"/>
    <property type="match status" value="1"/>
</dbReference>
<dbReference type="PANTHER" id="PTHR42848">
    <property type="match status" value="1"/>
</dbReference>
<dbReference type="PANTHER" id="PTHR42848:SF1">
    <property type="entry name" value="HOLLIDAY JUNCTION BRANCH MIGRATION COMPLEX SUBUNIT RUVB"/>
    <property type="match status" value="1"/>
</dbReference>
<dbReference type="Pfam" id="PF17864">
    <property type="entry name" value="AAA_lid_4"/>
    <property type="match status" value="1"/>
</dbReference>
<dbReference type="Pfam" id="PF05491">
    <property type="entry name" value="RuvB_C"/>
    <property type="match status" value="1"/>
</dbReference>
<dbReference type="Pfam" id="PF05496">
    <property type="entry name" value="RuvB_N"/>
    <property type="match status" value="1"/>
</dbReference>
<dbReference type="SMART" id="SM00382">
    <property type="entry name" value="AAA"/>
    <property type="match status" value="1"/>
</dbReference>
<dbReference type="SUPFAM" id="SSF52540">
    <property type="entry name" value="P-loop containing nucleoside triphosphate hydrolases"/>
    <property type="match status" value="1"/>
</dbReference>
<dbReference type="SUPFAM" id="SSF46785">
    <property type="entry name" value="Winged helix' DNA-binding domain"/>
    <property type="match status" value="1"/>
</dbReference>
<proteinExistence type="inferred from homology"/>